<comment type="function">
    <text evidence="1">Plays an important role in the de novo pathway of purine nucleotide biosynthesis. Catalyzes the first committed step in the biosynthesis of AMP from IMP.</text>
</comment>
<comment type="catalytic activity">
    <reaction evidence="1">
        <text>IMP + L-aspartate + GTP = N(6)-(1,2-dicarboxyethyl)-AMP + GDP + phosphate + 2 H(+)</text>
        <dbReference type="Rhea" id="RHEA:15753"/>
        <dbReference type="ChEBI" id="CHEBI:15378"/>
        <dbReference type="ChEBI" id="CHEBI:29991"/>
        <dbReference type="ChEBI" id="CHEBI:37565"/>
        <dbReference type="ChEBI" id="CHEBI:43474"/>
        <dbReference type="ChEBI" id="CHEBI:57567"/>
        <dbReference type="ChEBI" id="CHEBI:58053"/>
        <dbReference type="ChEBI" id="CHEBI:58189"/>
        <dbReference type="EC" id="6.3.4.4"/>
    </reaction>
</comment>
<comment type="cofactor">
    <cofactor evidence="1">
        <name>Mg(2+)</name>
        <dbReference type="ChEBI" id="CHEBI:18420"/>
    </cofactor>
    <text evidence="1">Binds 1 Mg(2+) ion per subunit.</text>
</comment>
<comment type="pathway">
    <text evidence="1">Purine metabolism; AMP biosynthesis via de novo pathway; AMP from IMP: step 1/2.</text>
</comment>
<comment type="subunit">
    <text evidence="1">Homodimer.</text>
</comment>
<comment type="subcellular location">
    <subcellularLocation>
        <location evidence="1">Cytoplasm</location>
    </subcellularLocation>
</comment>
<comment type="similarity">
    <text evidence="1">Belongs to the adenylosuccinate synthetase family.</text>
</comment>
<proteinExistence type="inferred from homology"/>
<keyword id="KW-0963">Cytoplasm</keyword>
<keyword id="KW-0342">GTP-binding</keyword>
<keyword id="KW-0436">Ligase</keyword>
<keyword id="KW-0460">Magnesium</keyword>
<keyword id="KW-0479">Metal-binding</keyword>
<keyword id="KW-0547">Nucleotide-binding</keyword>
<keyword id="KW-0658">Purine biosynthesis</keyword>
<keyword id="KW-1185">Reference proteome</keyword>
<gene>
    <name evidence="1" type="primary">purA</name>
    <name type="ordered locus">CA_C3593</name>
</gene>
<accession>Q97D87</accession>
<sequence>MSAFIVLGAQWGDEGKGKMTDYLAQGADVVVRFQGGNNAGHTVEVEDKKYKLHLIPSGILYKNKVNVIGNGVVLDPKAMFEEVEYLKGMGVEVTPENLIVSDRAHLIMPYHRALDGASEKHRGKNDIGTTGKGIGPCYTDKAERSGIRVCDLLHPEVFKEKLKSNLEIKNAIITKVYGMDAFDYNEICEEYLAFGEKLKPFVKDTSVIVYNEIKNGKKVLFEGAQGNLLDIDYGTYPYVTSSNTIGGGVCPGAAIGPTMITSAVGIAKAYTTRVGKGPFPTELLDEMGDRIREAGFEYGVTTGRARRCGWLDTVILKQAARVSGLTSFAMTKIDTLAGIDKVKVCIGYDFNGKTIDYIPASLEDLALCKPIYEEFDGWDESVADARSYDELPLNAKKYLKRIEELTETKISIVSVGPERNHTIEVSDI</sequence>
<organism>
    <name type="scientific">Clostridium acetobutylicum (strain ATCC 824 / DSM 792 / JCM 1419 / IAM 19013 / LMG 5710 / NBRC 13948 / NRRL B-527 / VKM B-1787 / 2291 / W)</name>
    <dbReference type="NCBI Taxonomy" id="272562"/>
    <lineage>
        <taxon>Bacteria</taxon>
        <taxon>Bacillati</taxon>
        <taxon>Bacillota</taxon>
        <taxon>Clostridia</taxon>
        <taxon>Eubacteriales</taxon>
        <taxon>Clostridiaceae</taxon>
        <taxon>Clostridium</taxon>
    </lineage>
</organism>
<dbReference type="EC" id="6.3.4.4" evidence="1"/>
<dbReference type="EMBL" id="AE001437">
    <property type="protein sequence ID" value="AAK81516.1"/>
    <property type="molecule type" value="Genomic_DNA"/>
</dbReference>
<dbReference type="PIR" id="A97341">
    <property type="entry name" value="A97341"/>
</dbReference>
<dbReference type="RefSeq" id="NP_350176.1">
    <property type="nucleotide sequence ID" value="NC_003030.1"/>
</dbReference>
<dbReference type="RefSeq" id="WP_010966856.1">
    <property type="nucleotide sequence ID" value="NC_003030.1"/>
</dbReference>
<dbReference type="SMR" id="Q97D87"/>
<dbReference type="STRING" id="272562.CA_C3593"/>
<dbReference type="KEGG" id="cac:CA_C3593"/>
<dbReference type="PATRIC" id="fig|272562.8.peg.3782"/>
<dbReference type="eggNOG" id="COG0104">
    <property type="taxonomic scope" value="Bacteria"/>
</dbReference>
<dbReference type="HOGENOM" id="CLU_029848_0_0_9"/>
<dbReference type="OrthoDB" id="9807553at2"/>
<dbReference type="UniPathway" id="UPA00075">
    <property type="reaction ID" value="UER00335"/>
</dbReference>
<dbReference type="Proteomes" id="UP000000814">
    <property type="component" value="Chromosome"/>
</dbReference>
<dbReference type="GO" id="GO:0005737">
    <property type="term" value="C:cytoplasm"/>
    <property type="evidence" value="ECO:0007669"/>
    <property type="project" value="UniProtKB-SubCell"/>
</dbReference>
<dbReference type="GO" id="GO:0004019">
    <property type="term" value="F:adenylosuccinate synthase activity"/>
    <property type="evidence" value="ECO:0007669"/>
    <property type="project" value="UniProtKB-UniRule"/>
</dbReference>
<dbReference type="GO" id="GO:0005525">
    <property type="term" value="F:GTP binding"/>
    <property type="evidence" value="ECO:0007669"/>
    <property type="project" value="UniProtKB-UniRule"/>
</dbReference>
<dbReference type="GO" id="GO:0000287">
    <property type="term" value="F:magnesium ion binding"/>
    <property type="evidence" value="ECO:0007669"/>
    <property type="project" value="UniProtKB-UniRule"/>
</dbReference>
<dbReference type="GO" id="GO:0044208">
    <property type="term" value="P:'de novo' AMP biosynthetic process"/>
    <property type="evidence" value="ECO:0007669"/>
    <property type="project" value="UniProtKB-UniRule"/>
</dbReference>
<dbReference type="GO" id="GO:0046040">
    <property type="term" value="P:IMP metabolic process"/>
    <property type="evidence" value="ECO:0007669"/>
    <property type="project" value="TreeGrafter"/>
</dbReference>
<dbReference type="CDD" id="cd03108">
    <property type="entry name" value="AdSS"/>
    <property type="match status" value="1"/>
</dbReference>
<dbReference type="FunFam" id="1.10.300.10:FF:000001">
    <property type="entry name" value="Adenylosuccinate synthetase"/>
    <property type="match status" value="1"/>
</dbReference>
<dbReference type="FunFam" id="3.90.170.10:FF:000001">
    <property type="entry name" value="Adenylosuccinate synthetase"/>
    <property type="match status" value="1"/>
</dbReference>
<dbReference type="Gene3D" id="3.40.440.10">
    <property type="entry name" value="Adenylosuccinate Synthetase, subunit A, domain 1"/>
    <property type="match status" value="1"/>
</dbReference>
<dbReference type="Gene3D" id="1.10.300.10">
    <property type="entry name" value="Adenylosuccinate Synthetase, subunit A, domain 2"/>
    <property type="match status" value="1"/>
</dbReference>
<dbReference type="Gene3D" id="3.90.170.10">
    <property type="entry name" value="Adenylosuccinate Synthetase, subunit A, domain 3"/>
    <property type="match status" value="1"/>
</dbReference>
<dbReference type="HAMAP" id="MF_00011">
    <property type="entry name" value="Adenylosucc_synth"/>
    <property type="match status" value="1"/>
</dbReference>
<dbReference type="InterPro" id="IPR018220">
    <property type="entry name" value="Adenylosuccin_syn_GTP-bd"/>
</dbReference>
<dbReference type="InterPro" id="IPR033128">
    <property type="entry name" value="Adenylosuccin_syn_Lys_AS"/>
</dbReference>
<dbReference type="InterPro" id="IPR042109">
    <property type="entry name" value="Adenylosuccinate_synth_dom1"/>
</dbReference>
<dbReference type="InterPro" id="IPR042110">
    <property type="entry name" value="Adenylosuccinate_synth_dom2"/>
</dbReference>
<dbReference type="InterPro" id="IPR042111">
    <property type="entry name" value="Adenylosuccinate_synth_dom3"/>
</dbReference>
<dbReference type="InterPro" id="IPR001114">
    <property type="entry name" value="Adenylosuccinate_synthetase"/>
</dbReference>
<dbReference type="InterPro" id="IPR027417">
    <property type="entry name" value="P-loop_NTPase"/>
</dbReference>
<dbReference type="NCBIfam" id="NF002223">
    <property type="entry name" value="PRK01117.1"/>
    <property type="match status" value="1"/>
</dbReference>
<dbReference type="NCBIfam" id="TIGR00184">
    <property type="entry name" value="purA"/>
    <property type="match status" value="1"/>
</dbReference>
<dbReference type="PANTHER" id="PTHR11846">
    <property type="entry name" value="ADENYLOSUCCINATE SYNTHETASE"/>
    <property type="match status" value="1"/>
</dbReference>
<dbReference type="PANTHER" id="PTHR11846:SF0">
    <property type="entry name" value="ADENYLOSUCCINATE SYNTHETASE"/>
    <property type="match status" value="1"/>
</dbReference>
<dbReference type="Pfam" id="PF00709">
    <property type="entry name" value="Adenylsucc_synt"/>
    <property type="match status" value="1"/>
</dbReference>
<dbReference type="SMART" id="SM00788">
    <property type="entry name" value="Adenylsucc_synt"/>
    <property type="match status" value="1"/>
</dbReference>
<dbReference type="SUPFAM" id="SSF52540">
    <property type="entry name" value="P-loop containing nucleoside triphosphate hydrolases"/>
    <property type="match status" value="1"/>
</dbReference>
<dbReference type="PROSITE" id="PS01266">
    <property type="entry name" value="ADENYLOSUCCIN_SYN_1"/>
    <property type="match status" value="1"/>
</dbReference>
<dbReference type="PROSITE" id="PS00513">
    <property type="entry name" value="ADENYLOSUCCIN_SYN_2"/>
    <property type="match status" value="1"/>
</dbReference>
<reference key="1">
    <citation type="journal article" date="2001" name="J. Bacteriol.">
        <title>Genome sequence and comparative analysis of the solvent-producing bacterium Clostridium acetobutylicum.</title>
        <authorList>
            <person name="Noelling J."/>
            <person name="Breton G."/>
            <person name="Omelchenko M.V."/>
            <person name="Makarova K.S."/>
            <person name="Zeng Q."/>
            <person name="Gibson R."/>
            <person name="Lee H.M."/>
            <person name="Dubois J."/>
            <person name="Qiu D."/>
            <person name="Hitti J."/>
            <person name="Wolf Y.I."/>
            <person name="Tatusov R.L."/>
            <person name="Sabathe F."/>
            <person name="Doucette-Stamm L.A."/>
            <person name="Soucaille P."/>
            <person name="Daly M.J."/>
            <person name="Bennett G.N."/>
            <person name="Koonin E.V."/>
            <person name="Smith D.R."/>
        </authorList>
    </citation>
    <scope>NUCLEOTIDE SEQUENCE [LARGE SCALE GENOMIC DNA]</scope>
    <source>
        <strain>ATCC 824 / DSM 792 / JCM 1419 / IAM 19013 / LMG 5710 / NBRC 13948 / NRRL B-527 / VKM B-1787 / 2291 / W</strain>
    </source>
</reference>
<feature type="chain" id="PRO_0000095167" description="Adenylosuccinate synthetase">
    <location>
        <begin position="1"/>
        <end position="428"/>
    </location>
</feature>
<feature type="active site" description="Proton acceptor" evidence="1">
    <location>
        <position position="13"/>
    </location>
</feature>
<feature type="active site" description="Proton donor" evidence="1">
    <location>
        <position position="41"/>
    </location>
</feature>
<feature type="binding site" evidence="1">
    <location>
        <begin position="12"/>
        <end position="18"/>
    </location>
    <ligand>
        <name>GTP</name>
        <dbReference type="ChEBI" id="CHEBI:37565"/>
    </ligand>
</feature>
<feature type="binding site" description="in other chain" evidence="1">
    <location>
        <begin position="13"/>
        <end position="16"/>
    </location>
    <ligand>
        <name>IMP</name>
        <dbReference type="ChEBI" id="CHEBI:58053"/>
        <note>ligand shared between dimeric partners</note>
    </ligand>
</feature>
<feature type="binding site" evidence="1">
    <location>
        <position position="13"/>
    </location>
    <ligand>
        <name>Mg(2+)</name>
        <dbReference type="ChEBI" id="CHEBI:18420"/>
    </ligand>
</feature>
<feature type="binding site" description="in other chain" evidence="1">
    <location>
        <begin position="38"/>
        <end position="41"/>
    </location>
    <ligand>
        <name>IMP</name>
        <dbReference type="ChEBI" id="CHEBI:58053"/>
        <note>ligand shared between dimeric partners</note>
    </ligand>
</feature>
<feature type="binding site" evidence="1">
    <location>
        <begin position="40"/>
        <end position="42"/>
    </location>
    <ligand>
        <name>GTP</name>
        <dbReference type="ChEBI" id="CHEBI:37565"/>
    </ligand>
</feature>
<feature type="binding site" evidence="1">
    <location>
        <position position="40"/>
    </location>
    <ligand>
        <name>Mg(2+)</name>
        <dbReference type="ChEBI" id="CHEBI:18420"/>
    </ligand>
</feature>
<feature type="binding site" description="in other chain" evidence="1">
    <location>
        <position position="130"/>
    </location>
    <ligand>
        <name>IMP</name>
        <dbReference type="ChEBI" id="CHEBI:58053"/>
        <note>ligand shared between dimeric partners</note>
    </ligand>
</feature>
<feature type="binding site" evidence="1">
    <location>
        <position position="144"/>
    </location>
    <ligand>
        <name>IMP</name>
        <dbReference type="ChEBI" id="CHEBI:58053"/>
        <note>ligand shared between dimeric partners</note>
    </ligand>
</feature>
<feature type="binding site" description="in other chain" evidence="1">
    <location>
        <position position="225"/>
    </location>
    <ligand>
        <name>IMP</name>
        <dbReference type="ChEBI" id="CHEBI:58053"/>
        <note>ligand shared between dimeric partners</note>
    </ligand>
</feature>
<feature type="binding site" description="in other chain" evidence="1">
    <location>
        <position position="240"/>
    </location>
    <ligand>
        <name>IMP</name>
        <dbReference type="ChEBI" id="CHEBI:58053"/>
        <note>ligand shared between dimeric partners</note>
    </ligand>
</feature>
<feature type="binding site" evidence="1">
    <location>
        <begin position="300"/>
        <end position="306"/>
    </location>
    <ligand>
        <name>substrate</name>
    </ligand>
</feature>
<feature type="binding site" description="in other chain" evidence="1">
    <location>
        <position position="304"/>
    </location>
    <ligand>
        <name>IMP</name>
        <dbReference type="ChEBI" id="CHEBI:58053"/>
        <note>ligand shared between dimeric partners</note>
    </ligand>
</feature>
<feature type="binding site" evidence="1">
    <location>
        <position position="306"/>
    </location>
    <ligand>
        <name>GTP</name>
        <dbReference type="ChEBI" id="CHEBI:37565"/>
    </ligand>
</feature>
<feature type="binding site" evidence="1">
    <location>
        <begin position="332"/>
        <end position="334"/>
    </location>
    <ligand>
        <name>GTP</name>
        <dbReference type="ChEBI" id="CHEBI:37565"/>
    </ligand>
</feature>
<feature type="binding site" evidence="1">
    <location>
        <begin position="414"/>
        <end position="416"/>
    </location>
    <ligand>
        <name>GTP</name>
        <dbReference type="ChEBI" id="CHEBI:37565"/>
    </ligand>
</feature>
<name>PURA_CLOAB</name>
<evidence type="ECO:0000255" key="1">
    <source>
        <dbReference type="HAMAP-Rule" id="MF_00011"/>
    </source>
</evidence>
<protein>
    <recommendedName>
        <fullName evidence="1">Adenylosuccinate synthetase</fullName>
        <shortName evidence="1">AMPSase</shortName>
        <shortName evidence="1">AdSS</shortName>
        <ecNumber evidence="1">6.3.4.4</ecNumber>
    </recommendedName>
    <alternativeName>
        <fullName evidence="1">IMP--aspartate ligase</fullName>
    </alternativeName>
</protein>